<dbReference type="EC" id="2.1.1.177" evidence="1"/>
<dbReference type="EMBL" id="AE005176">
    <property type="protein sequence ID" value="AAK06232.1"/>
    <property type="status" value="ALT_INIT"/>
    <property type="molecule type" value="Genomic_DNA"/>
</dbReference>
<dbReference type="PIR" id="F86891">
    <property type="entry name" value="F86891"/>
</dbReference>
<dbReference type="RefSeq" id="NP_268291.2">
    <property type="nucleotide sequence ID" value="NC_002662.1"/>
</dbReference>
<dbReference type="RefSeq" id="WP_003130585.1">
    <property type="nucleotide sequence ID" value="NC_002662.1"/>
</dbReference>
<dbReference type="SMR" id="Q9CDS7"/>
<dbReference type="PaxDb" id="272623-L185851"/>
<dbReference type="EnsemblBacteria" id="AAK06232">
    <property type="protein sequence ID" value="AAK06232"/>
    <property type="gene ID" value="L185851"/>
</dbReference>
<dbReference type="GeneID" id="89634480"/>
<dbReference type="KEGG" id="lla:L185851"/>
<dbReference type="PATRIC" id="fig|272623.7.peg.2293"/>
<dbReference type="eggNOG" id="COG1576">
    <property type="taxonomic scope" value="Bacteria"/>
</dbReference>
<dbReference type="HOGENOM" id="CLU_100552_0_0_9"/>
<dbReference type="OrthoDB" id="9806643at2"/>
<dbReference type="Proteomes" id="UP000002196">
    <property type="component" value="Chromosome"/>
</dbReference>
<dbReference type="GO" id="GO:0005737">
    <property type="term" value="C:cytoplasm"/>
    <property type="evidence" value="ECO:0007669"/>
    <property type="project" value="UniProtKB-SubCell"/>
</dbReference>
<dbReference type="GO" id="GO:0070038">
    <property type="term" value="F:rRNA (pseudouridine-N3-)-methyltransferase activity"/>
    <property type="evidence" value="ECO:0007669"/>
    <property type="project" value="UniProtKB-UniRule"/>
</dbReference>
<dbReference type="CDD" id="cd18081">
    <property type="entry name" value="RlmH-like"/>
    <property type="match status" value="1"/>
</dbReference>
<dbReference type="Gene3D" id="3.40.1280.10">
    <property type="match status" value="1"/>
</dbReference>
<dbReference type="HAMAP" id="MF_00658">
    <property type="entry name" value="23SrRNA_methyltr_H"/>
    <property type="match status" value="1"/>
</dbReference>
<dbReference type="InterPro" id="IPR029028">
    <property type="entry name" value="Alpha/beta_knot_MTases"/>
</dbReference>
<dbReference type="InterPro" id="IPR003742">
    <property type="entry name" value="RlmH-like"/>
</dbReference>
<dbReference type="InterPro" id="IPR029026">
    <property type="entry name" value="tRNA_m1G_MTases_N"/>
</dbReference>
<dbReference type="NCBIfam" id="NF000985">
    <property type="entry name" value="PRK00103.1-3"/>
    <property type="match status" value="1"/>
</dbReference>
<dbReference type="NCBIfam" id="TIGR00246">
    <property type="entry name" value="tRNA_RlmH_YbeA"/>
    <property type="match status" value="1"/>
</dbReference>
<dbReference type="PANTHER" id="PTHR33603">
    <property type="entry name" value="METHYLTRANSFERASE"/>
    <property type="match status" value="1"/>
</dbReference>
<dbReference type="PANTHER" id="PTHR33603:SF1">
    <property type="entry name" value="RIBOSOMAL RNA LARGE SUBUNIT METHYLTRANSFERASE H"/>
    <property type="match status" value="1"/>
</dbReference>
<dbReference type="Pfam" id="PF02590">
    <property type="entry name" value="SPOUT_MTase"/>
    <property type="match status" value="1"/>
</dbReference>
<dbReference type="PIRSF" id="PIRSF004505">
    <property type="entry name" value="MT_bac"/>
    <property type="match status" value="1"/>
</dbReference>
<dbReference type="SUPFAM" id="SSF75217">
    <property type="entry name" value="alpha/beta knot"/>
    <property type="match status" value="1"/>
</dbReference>
<keyword id="KW-0963">Cytoplasm</keyword>
<keyword id="KW-0489">Methyltransferase</keyword>
<keyword id="KW-1185">Reference proteome</keyword>
<keyword id="KW-0698">rRNA processing</keyword>
<keyword id="KW-0949">S-adenosyl-L-methionine</keyword>
<keyword id="KW-0808">Transferase</keyword>
<sequence>MKIKLVVVGKLKEKYLKDGIAEYVKRMGTMLPLEIIELADEKIPDNASEKEAEALKKREGEKILSRIQAGDQLAILAIQGKLMSSEEVADFVKKAEVYGTGNLVFVIGGSLGLSKEVYQRSDLQISFGRMTLPHQLMRLVLVEQIYRAQMINRGSAYHK</sequence>
<organism>
    <name type="scientific">Lactococcus lactis subsp. lactis (strain IL1403)</name>
    <name type="common">Streptococcus lactis</name>
    <dbReference type="NCBI Taxonomy" id="272623"/>
    <lineage>
        <taxon>Bacteria</taxon>
        <taxon>Bacillati</taxon>
        <taxon>Bacillota</taxon>
        <taxon>Bacilli</taxon>
        <taxon>Lactobacillales</taxon>
        <taxon>Streptococcaceae</taxon>
        <taxon>Lactococcus</taxon>
    </lineage>
</organism>
<gene>
    <name evidence="1" type="primary">rlmH</name>
    <name type="synonym">ywaE</name>
    <name type="ordered locus">LL2134</name>
    <name type="ORF">L185851</name>
</gene>
<proteinExistence type="inferred from homology"/>
<accession>Q9CDS7</accession>
<evidence type="ECO:0000255" key="1">
    <source>
        <dbReference type="HAMAP-Rule" id="MF_00658"/>
    </source>
</evidence>
<evidence type="ECO:0000305" key="2"/>
<protein>
    <recommendedName>
        <fullName evidence="1">Ribosomal RNA large subunit methyltransferase H</fullName>
        <ecNumber evidence="1">2.1.1.177</ecNumber>
    </recommendedName>
    <alternativeName>
        <fullName evidence="1">23S rRNA (pseudouridine1915-N3)-methyltransferase</fullName>
    </alternativeName>
    <alternativeName>
        <fullName evidence="1">23S rRNA m3Psi1915 methyltransferase</fullName>
    </alternativeName>
    <alternativeName>
        <fullName evidence="1">rRNA (pseudouridine-N3-)-methyltransferase RlmH</fullName>
    </alternativeName>
</protein>
<feature type="chain" id="PRO_0000198133" description="Ribosomal RNA large subunit methyltransferase H">
    <location>
        <begin position="1"/>
        <end position="159"/>
    </location>
</feature>
<feature type="binding site" evidence="1">
    <location>
        <position position="75"/>
    </location>
    <ligand>
        <name>S-adenosyl-L-methionine</name>
        <dbReference type="ChEBI" id="CHEBI:59789"/>
    </ligand>
</feature>
<feature type="binding site" evidence="1">
    <location>
        <position position="108"/>
    </location>
    <ligand>
        <name>S-adenosyl-L-methionine</name>
        <dbReference type="ChEBI" id="CHEBI:59789"/>
    </ligand>
</feature>
<feature type="binding site" evidence="1">
    <location>
        <begin position="127"/>
        <end position="132"/>
    </location>
    <ligand>
        <name>S-adenosyl-L-methionine</name>
        <dbReference type="ChEBI" id="CHEBI:59789"/>
    </ligand>
</feature>
<reference key="1">
    <citation type="journal article" date="2001" name="Genome Res.">
        <title>The complete genome sequence of the lactic acid bacterium Lactococcus lactis ssp. lactis IL1403.</title>
        <authorList>
            <person name="Bolotin A."/>
            <person name="Wincker P."/>
            <person name="Mauger S."/>
            <person name="Jaillon O."/>
            <person name="Malarme K."/>
            <person name="Weissenbach J."/>
            <person name="Ehrlich S.D."/>
            <person name="Sorokin A."/>
        </authorList>
    </citation>
    <scope>NUCLEOTIDE SEQUENCE [LARGE SCALE GENOMIC DNA]</scope>
    <source>
        <strain>IL1403</strain>
    </source>
</reference>
<comment type="function">
    <text evidence="1">Specifically methylates the pseudouridine at position 1915 (m3Psi1915) in 23S rRNA.</text>
</comment>
<comment type="catalytic activity">
    <reaction evidence="1">
        <text>pseudouridine(1915) in 23S rRNA + S-adenosyl-L-methionine = N(3)-methylpseudouridine(1915) in 23S rRNA + S-adenosyl-L-homocysteine + H(+)</text>
        <dbReference type="Rhea" id="RHEA:42752"/>
        <dbReference type="Rhea" id="RHEA-COMP:10221"/>
        <dbReference type="Rhea" id="RHEA-COMP:10222"/>
        <dbReference type="ChEBI" id="CHEBI:15378"/>
        <dbReference type="ChEBI" id="CHEBI:57856"/>
        <dbReference type="ChEBI" id="CHEBI:59789"/>
        <dbReference type="ChEBI" id="CHEBI:65314"/>
        <dbReference type="ChEBI" id="CHEBI:74486"/>
        <dbReference type="EC" id="2.1.1.177"/>
    </reaction>
</comment>
<comment type="subunit">
    <text evidence="1">Homodimer.</text>
</comment>
<comment type="subcellular location">
    <subcellularLocation>
        <location evidence="1">Cytoplasm</location>
    </subcellularLocation>
</comment>
<comment type="similarity">
    <text evidence="1">Belongs to the RNA methyltransferase RlmH family.</text>
</comment>
<comment type="sequence caution" evidence="2">
    <conflict type="erroneous initiation">
        <sequence resource="EMBL-CDS" id="AAK06232"/>
    </conflict>
</comment>
<name>RLMH_LACLA</name>